<evidence type="ECO:0000250" key="1">
    <source>
        <dbReference type="UniProtKB" id="P01443"/>
    </source>
</evidence>
<evidence type="ECO:0000250" key="2">
    <source>
        <dbReference type="UniProtKB" id="P60301"/>
    </source>
</evidence>
<evidence type="ECO:0000269" key="3">
    <source>
    </source>
</evidence>
<evidence type="ECO:0000269" key="4">
    <source>
    </source>
</evidence>
<evidence type="ECO:0000269" key="5">
    <source>
    </source>
</evidence>
<evidence type="ECO:0000269" key="6">
    <source>
    </source>
</evidence>
<evidence type="ECO:0000269" key="7">
    <source>
    </source>
</evidence>
<evidence type="ECO:0000303" key="8">
    <source>
    </source>
</evidence>
<evidence type="ECO:0000303" key="9">
    <source>
    </source>
</evidence>
<evidence type="ECO:0000305" key="10"/>
<evidence type="ECO:0000312" key="11">
    <source>
        <dbReference type="PDB" id="1CXN"/>
    </source>
</evidence>
<evidence type="ECO:0000312" key="12">
    <source>
        <dbReference type="PDB" id="1CXO"/>
    </source>
</evidence>
<evidence type="ECO:0000312" key="13">
    <source>
        <dbReference type="PDB" id="1TGX"/>
    </source>
</evidence>
<evidence type="ECO:0007829" key="14">
    <source>
        <dbReference type="PDB" id="1CXN"/>
    </source>
</evidence>
<evidence type="ECO:0007829" key="15">
    <source>
        <dbReference type="PDB" id="1TGX"/>
    </source>
</evidence>
<keyword id="KW-0002">3D-structure</keyword>
<keyword id="KW-0123">Cardiotoxin</keyword>
<keyword id="KW-0204">Cytolysis</keyword>
<keyword id="KW-0903">Direct protein sequencing</keyword>
<keyword id="KW-1015">Disulfide bond</keyword>
<keyword id="KW-0354">Hemolysis</keyword>
<keyword id="KW-0472">Membrane</keyword>
<keyword id="KW-0964">Secreted</keyword>
<keyword id="KW-1052">Target cell membrane</keyword>
<keyword id="KW-1053">Target membrane</keyword>
<keyword id="KW-0800">Toxin</keyword>
<dbReference type="PIR" id="A37578">
    <property type="entry name" value="H3NJ1B"/>
</dbReference>
<dbReference type="PDB" id="1CXN">
    <property type="method" value="NMR"/>
    <property type="chains" value="A=1-60"/>
</dbReference>
<dbReference type="PDB" id="1CXO">
    <property type="method" value="NMR"/>
    <property type="chains" value="A=1-60"/>
</dbReference>
<dbReference type="PDB" id="1TGX">
    <property type="method" value="X-ray"/>
    <property type="resolution" value="1.55 A"/>
    <property type="chains" value="A/B/C=1-60"/>
</dbReference>
<dbReference type="PDB" id="9BK6">
    <property type="method" value="X-ray"/>
    <property type="resolution" value="2.00 A"/>
    <property type="chains" value="B=1-60"/>
</dbReference>
<dbReference type="PDBsum" id="1CXN"/>
<dbReference type="PDBsum" id="1CXO"/>
<dbReference type="PDBsum" id="1TGX"/>
<dbReference type="PDBsum" id="9BK6"/>
<dbReference type="SMR" id="P01468"/>
<dbReference type="EvolutionaryTrace" id="P01468"/>
<dbReference type="GO" id="GO:0005576">
    <property type="term" value="C:extracellular region"/>
    <property type="evidence" value="ECO:0007669"/>
    <property type="project" value="UniProtKB-SubCell"/>
</dbReference>
<dbReference type="GO" id="GO:0016020">
    <property type="term" value="C:membrane"/>
    <property type="evidence" value="ECO:0007669"/>
    <property type="project" value="UniProtKB-KW"/>
</dbReference>
<dbReference type="GO" id="GO:0044218">
    <property type="term" value="C:other organism cell membrane"/>
    <property type="evidence" value="ECO:0007669"/>
    <property type="project" value="UniProtKB-KW"/>
</dbReference>
<dbReference type="GO" id="GO:0090729">
    <property type="term" value="F:toxin activity"/>
    <property type="evidence" value="ECO:0007669"/>
    <property type="project" value="UniProtKB-KW"/>
</dbReference>
<dbReference type="GO" id="GO:0031640">
    <property type="term" value="P:killing of cells of another organism"/>
    <property type="evidence" value="ECO:0007669"/>
    <property type="project" value="UniProtKB-KW"/>
</dbReference>
<dbReference type="CDD" id="cd00206">
    <property type="entry name" value="TFP_snake_toxin"/>
    <property type="match status" value="1"/>
</dbReference>
<dbReference type="FunFam" id="2.10.60.10:FF:000024">
    <property type="entry name" value="Cytotoxin 1"/>
    <property type="match status" value="1"/>
</dbReference>
<dbReference type="Gene3D" id="2.10.60.10">
    <property type="entry name" value="CD59"/>
    <property type="match status" value="1"/>
</dbReference>
<dbReference type="InterPro" id="IPR003572">
    <property type="entry name" value="Cytotoxin_Cobra"/>
</dbReference>
<dbReference type="InterPro" id="IPR003571">
    <property type="entry name" value="Snake_3FTx"/>
</dbReference>
<dbReference type="InterPro" id="IPR045860">
    <property type="entry name" value="Snake_toxin-like_sf"/>
</dbReference>
<dbReference type="InterPro" id="IPR018354">
    <property type="entry name" value="Snake_toxin_con_site"/>
</dbReference>
<dbReference type="InterPro" id="IPR054131">
    <property type="entry name" value="Toxin_cobra-type"/>
</dbReference>
<dbReference type="Pfam" id="PF21947">
    <property type="entry name" value="Toxin_cobra-type"/>
    <property type="match status" value="1"/>
</dbReference>
<dbReference type="PRINTS" id="PR00282">
    <property type="entry name" value="CYTOTOXIN"/>
</dbReference>
<dbReference type="SUPFAM" id="SSF57302">
    <property type="entry name" value="Snake toxin-like"/>
    <property type="match status" value="1"/>
</dbReference>
<dbReference type="PROSITE" id="PS00272">
    <property type="entry name" value="SNAKE_TOXIN"/>
    <property type="match status" value="1"/>
</dbReference>
<sequence>LKCNQLIPPFWKTCPKGKNLCYKMTMRAAPMVPVKRGCIDVCPKSSLLIKYMCCNTDKCN</sequence>
<comment type="function">
    <text evidence="1">Basic protein that binds to cell membrane and depolarizes cardiomyocytes. This cytotoxin also possesses lytic activity on many other cells, including red blood cells. Interaction with sulfatides in the cell membrane induces pore formation and cell internalization and is responsible for cytotoxicity in cardiomyocytes. It targets the mitochondrial membrane and induces mitochondrial swelling and fragmentation. Inhibits protein kinases C. It binds to the integrin alpha-V/beta-3 with a moderate affinity.</text>
</comment>
<comment type="subunit">
    <text evidence="2">Monomer in solution; Homodimer and oligomer in the presence of negatively charged lipids forming a pore with a size ranging between 20 and 30 angstroms.</text>
</comment>
<comment type="subcellular location">
    <subcellularLocation>
        <location evidence="3">Secreted</location>
    </subcellularLocation>
    <subcellularLocation>
        <location evidence="2">Target cell membrane</location>
    </subcellularLocation>
</comment>
<comment type="tissue specificity">
    <text evidence="10">Expressed by the venom gland.</text>
</comment>
<comment type="miscellaneous">
    <text evidence="4">Positive charges of Lys residues are necessary for cytolytic activity of this toxin, but not for its binding ability.</text>
</comment>
<comment type="miscellaneous">
    <text evidence="10">Is classified as a P-type cytotoxin, since a proline residue stands at position 30 (Pro-31 in standard classification).</text>
</comment>
<comment type="similarity">
    <text evidence="10">Belongs to the three-finger toxin family. Short-chain subfamily. Type IA cytotoxin sub-subfamily.</text>
</comment>
<comment type="caution">
    <text evidence="10">The venom of this snake was originally thought to be that of N.nigricollis while it is really from N.pallida.</text>
</comment>
<reference key="1">
    <citation type="journal article" date="1975" name="Biochemistry">
        <title>The complete covalent structure of a cardiotoxin from the venom of Naja nigricollis (African black-necked spitting cobra).</title>
        <authorList>
            <person name="Fryklund L."/>
            <person name="Eaker D."/>
        </authorList>
    </citation>
    <scope>PROTEIN SEQUENCE</scope>
    <scope>DISULFIDE BONDS</scope>
    <scope>SUBCELLULAR LOCATION</scope>
    <source>
        <tissue>Venom</tissue>
    </source>
</reference>
<reference key="2">
    <citation type="journal article" date="1989" name="Biochemistry">
        <title>Role of cationic residues in cytolytic activity: modification of lysine residues in the cardiotoxin from Naja nigricollis venom and correlation between cytolytic and antiplatelet activity.</title>
        <authorList>
            <person name="Kini R.M."/>
            <person name="Evans H.J."/>
        </authorList>
    </citation>
    <scope>PROTEIN SEQUENCE</scope>
    <scope>IMPORTANCE OF LYS RESIDUES</scope>
    <source>
        <tissue>Venom</tissue>
    </source>
</reference>
<reference key="3">
    <citation type="journal article" date="1993" name="Biopolymers">
        <title>Refined three-dimensional solution structure of a snake cardiotoxin: analysis of the side-chain organization suggests the existence of a possible phospholipid binding site.</title>
        <authorList>
            <person name="Gilquin B."/>
            <person name="Roumestand C."/>
            <person name="Zinn-Justin S."/>
            <person name="Menez A."/>
            <person name="Toma F."/>
        </authorList>
    </citation>
    <scope>STRUCTURE BY NMR</scope>
    <scope>DISULFIDE BONDS</scope>
</reference>
<reference key="4">
    <citation type="journal article" date="1994" name="J. Mol. Biol.">
        <title>X-ray structure at 1.55 A of toxin gamma, a cardiotoxin from Naja nigricollis venom. Crystal packing reveals a model for insertion into membranes.</title>
        <authorList>
            <person name="Bilwes A."/>
            <person name="Rees B."/>
            <person name="Moras D."/>
            <person name="Menez R."/>
            <person name="Menez A."/>
        </authorList>
    </citation>
    <scope>X-RAY CRYSTALLOGRAPHY (1.55 ANGSTROMS)</scope>
    <scope>DISULFIDE BONDS</scope>
</reference>
<reference key="5">
    <citation type="journal article" date="1995" name="Eur. J. Biochem.">
        <title>An NMR study of the interaction of cardiotoxin gamma from Naja nigricollis with perdeuterated dodecylphosphocholine micelles.</title>
        <authorList>
            <person name="Dauplais M."/>
            <person name="Neumann J.M."/>
            <person name="Pinkasfeld S."/>
            <person name="Menez A."/>
            <person name="Roumestand C."/>
        </authorList>
    </citation>
    <scope>STRUCTURE BY NMR</scope>
    <scope>DISULFIDE BONDS</scope>
</reference>
<accession>P01468</accession>
<name>3SA1_NAJPA</name>
<protein>
    <recommendedName>
        <fullName>Cytotoxin 1</fullName>
        <shortName evidence="8">CTX-1</shortName>
    </recommendedName>
    <alternativeName>
        <fullName evidence="9">Cardiotoxin gamma</fullName>
    </alternativeName>
</protein>
<proteinExistence type="evidence at protein level"/>
<organism>
    <name type="scientific">Naja pallida</name>
    <name type="common">Red spitting cobra</name>
    <dbReference type="NCBI Taxonomy" id="8658"/>
    <lineage>
        <taxon>Eukaryota</taxon>
        <taxon>Metazoa</taxon>
        <taxon>Chordata</taxon>
        <taxon>Craniata</taxon>
        <taxon>Vertebrata</taxon>
        <taxon>Euteleostomi</taxon>
        <taxon>Lepidosauria</taxon>
        <taxon>Squamata</taxon>
        <taxon>Bifurcata</taxon>
        <taxon>Unidentata</taxon>
        <taxon>Episquamata</taxon>
        <taxon>Toxicofera</taxon>
        <taxon>Serpentes</taxon>
        <taxon>Colubroidea</taxon>
        <taxon>Elapidae</taxon>
        <taxon>Elapinae</taxon>
        <taxon>Naja</taxon>
    </lineage>
</organism>
<feature type="chain" id="PRO_0000093519" description="Cytotoxin 1" evidence="3 4">
    <location>
        <begin position="1"/>
        <end position="60"/>
    </location>
</feature>
<feature type="disulfide bond" evidence="3 5 6 7 11 12 13">
    <location>
        <begin position="3"/>
        <end position="21"/>
    </location>
</feature>
<feature type="disulfide bond" evidence="3 5 6 7 11 12 13">
    <location>
        <begin position="14"/>
        <end position="38"/>
    </location>
</feature>
<feature type="disulfide bond" evidence="3 5 6 7 11 12 13">
    <location>
        <begin position="42"/>
        <end position="53"/>
    </location>
</feature>
<feature type="disulfide bond" evidence="3 5 6 7 11 12 13">
    <location>
        <begin position="54"/>
        <end position="59"/>
    </location>
</feature>
<feature type="strand" evidence="15">
    <location>
        <begin position="2"/>
        <end position="4"/>
    </location>
</feature>
<feature type="strand" evidence="14">
    <location>
        <begin position="6"/>
        <end position="9"/>
    </location>
</feature>
<feature type="strand" evidence="15">
    <location>
        <begin position="10"/>
        <end position="13"/>
    </location>
</feature>
<feature type="strand" evidence="15">
    <location>
        <begin position="20"/>
        <end position="26"/>
    </location>
</feature>
<feature type="strand" evidence="15">
    <location>
        <begin position="34"/>
        <end position="41"/>
    </location>
</feature>
<feature type="strand" evidence="15">
    <location>
        <begin position="47"/>
        <end position="54"/>
    </location>
</feature>